<sequence length="72" mass="8273">MAKEDVIEIEGKVVETMPNAMFTVELENGHQILATVSGKIRKNYIRILVGDRVTVEMSPYDLTRGRITYRFK</sequence>
<gene>
    <name evidence="1" type="primary">infA</name>
    <name type="ordered locus">gbs0080</name>
</gene>
<feature type="chain" id="PRO_0000095873" description="Translation initiation factor IF-1">
    <location>
        <begin position="1"/>
        <end position="72"/>
    </location>
</feature>
<feature type="domain" description="S1-like" evidence="1">
    <location>
        <begin position="1"/>
        <end position="72"/>
    </location>
</feature>
<accession>P65126</accession>
<accession>Q9A1V3</accession>
<protein>
    <recommendedName>
        <fullName evidence="1">Translation initiation factor IF-1</fullName>
    </recommendedName>
</protein>
<keyword id="KW-0963">Cytoplasm</keyword>
<keyword id="KW-0396">Initiation factor</keyword>
<keyword id="KW-0648">Protein biosynthesis</keyword>
<keyword id="KW-0694">RNA-binding</keyword>
<keyword id="KW-0699">rRNA-binding</keyword>
<comment type="function">
    <text evidence="1">One of the essential components for the initiation of protein synthesis. Stabilizes the binding of IF-2 and IF-3 on the 30S subunit to which N-formylmethionyl-tRNA(fMet) subsequently binds. Helps modulate mRNA selection, yielding the 30S pre-initiation complex (PIC). Upon addition of the 50S ribosomal subunit IF-1, IF-2 and IF-3 are released leaving the mature 70S translation initiation complex.</text>
</comment>
<comment type="subunit">
    <text evidence="1">Component of the 30S ribosomal translation pre-initiation complex which assembles on the 30S ribosome in the order IF-2 and IF-3, IF-1 and N-formylmethionyl-tRNA(fMet); mRNA recruitment can occur at any time during PIC assembly.</text>
</comment>
<comment type="subcellular location">
    <subcellularLocation>
        <location evidence="1">Cytoplasm</location>
    </subcellularLocation>
</comment>
<comment type="similarity">
    <text evidence="1">Belongs to the IF-1 family.</text>
</comment>
<name>IF1_STRA3</name>
<proteinExistence type="inferred from homology"/>
<organism>
    <name type="scientific">Streptococcus agalactiae serotype III (strain NEM316)</name>
    <dbReference type="NCBI Taxonomy" id="211110"/>
    <lineage>
        <taxon>Bacteria</taxon>
        <taxon>Bacillati</taxon>
        <taxon>Bacillota</taxon>
        <taxon>Bacilli</taxon>
        <taxon>Lactobacillales</taxon>
        <taxon>Streptococcaceae</taxon>
        <taxon>Streptococcus</taxon>
    </lineage>
</organism>
<reference key="1">
    <citation type="journal article" date="2002" name="Mol. Microbiol.">
        <title>Genome sequence of Streptococcus agalactiae, a pathogen causing invasive neonatal disease.</title>
        <authorList>
            <person name="Glaser P."/>
            <person name="Rusniok C."/>
            <person name="Buchrieser C."/>
            <person name="Chevalier F."/>
            <person name="Frangeul L."/>
            <person name="Msadek T."/>
            <person name="Zouine M."/>
            <person name="Couve E."/>
            <person name="Lalioui L."/>
            <person name="Poyart C."/>
            <person name="Trieu-Cuot P."/>
            <person name="Kunst F."/>
        </authorList>
    </citation>
    <scope>NUCLEOTIDE SEQUENCE [LARGE SCALE GENOMIC DNA]</scope>
    <source>
        <strain>NEM316</strain>
    </source>
</reference>
<evidence type="ECO:0000255" key="1">
    <source>
        <dbReference type="HAMAP-Rule" id="MF_00075"/>
    </source>
</evidence>
<dbReference type="EMBL" id="AL766843">
    <property type="protein sequence ID" value="CAD45725.1"/>
    <property type="molecule type" value="Genomic_DNA"/>
</dbReference>
<dbReference type="RefSeq" id="WP_001040189.1">
    <property type="nucleotide sequence ID" value="NC_004368.1"/>
</dbReference>
<dbReference type="SMR" id="P65126"/>
<dbReference type="GeneID" id="98392414"/>
<dbReference type="KEGG" id="san:gbs0080"/>
<dbReference type="eggNOG" id="COG0361">
    <property type="taxonomic scope" value="Bacteria"/>
</dbReference>
<dbReference type="HOGENOM" id="CLU_151267_1_0_9"/>
<dbReference type="Proteomes" id="UP000000823">
    <property type="component" value="Chromosome"/>
</dbReference>
<dbReference type="GO" id="GO:0005829">
    <property type="term" value="C:cytosol"/>
    <property type="evidence" value="ECO:0007669"/>
    <property type="project" value="TreeGrafter"/>
</dbReference>
<dbReference type="GO" id="GO:0043022">
    <property type="term" value="F:ribosome binding"/>
    <property type="evidence" value="ECO:0007669"/>
    <property type="project" value="UniProtKB-UniRule"/>
</dbReference>
<dbReference type="GO" id="GO:0019843">
    <property type="term" value="F:rRNA binding"/>
    <property type="evidence" value="ECO:0007669"/>
    <property type="project" value="UniProtKB-UniRule"/>
</dbReference>
<dbReference type="GO" id="GO:0003743">
    <property type="term" value="F:translation initiation factor activity"/>
    <property type="evidence" value="ECO:0007669"/>
    <property type="project" value="UniProtKB-UniRule"/>
</dbReference>
<dbReference type="CDD" id="cd04451">
    <property type="entry name" value="S1_IF1"/>
    <property type="match status" value="1"/>
</dbReference>
<dbReference type="FunFam" id="2.40.50.140:FF:000002">
    <property type="entry name" value="Translation initiation factor IF-1"/>
    <property type="match status" value="1"/>
</dbReference>
<dbReference type="Gene3D" id="2.40.50.140">
    <property type="entry name" value="Nucleic acid-binding proteins"/>
    <property type="match status" value="1"/>
</dbReference>
<dbReference type="HAMAP" id="MF_00075">
    <property type="entry name" value="IF_1"/>
    <property type="match status" value="1"/>
</dbReference>
<dbReference type="InterPro" id="IPR012340">
    <property type="entry name" value="NA-bd_OB-fold"/>
</dbReference>
<dbReference type="InterPro" id="IPR006196">
    <property type="entry name" value="RNA-binding_domain_S1_IF1"/>
</dbReference>
<dbReference type="InterPro" id="IPR003029">
    <property type="entry name" value="S1_domain"/>
</dbReference>
<dbReference type="InterPro" id="IPR004368">
    <property type="entry name" value="TIF_IF1"/>
</dbReference>
<dbReference type="NCBIfam" id="TIGR00008">
    <property type="entry name" value="infA"/>
    <property type="match status" value="1"/>
</dbReference>
<dbReference type="PANTHER" id="PTHR33370">
    <property type="entry name" value="TRANSLATION INITIATION FACTOR IF-1, CHLOROPLASTIC"/>
    <property type="match status" value="1"/>
</dbReference>
<dbReference type="PANTHER" id="PTHR33370:SF1">
    <property type="entry name" value="TRANSLATION INITIATION FACTOR IF-1, CHLOROPLASTIC"/>
    <property type="match status" value="1"/>
</dbReference>
<dbReference type="Pfam" id="PF01176">
    <property type="entry name" value="eIF-1a"/>
    <property type="match status" value="1"/>
</dbReference>
<dbReference type="SMART" id="SM00316">
    <property type="entry name" value="S1"/>
    <property type="match status" value="1"/>
</dbReference>
<dbReference type="SUPFAM" id="SSF50249">
    <property type="entry name" value="Nucleic acid-binding proteins"/>
    <property type="match status" value="1"/>
</dbReference>
<dbReference type="PROSITE" id="PS50832">
    <property type="entry name" value="S1_IF1_TYPE"/>
    <property type="match status" value="1"/>
</dbReference>